<evidence type="ECO:0000255" key="1"/>
<evidence type="ECO:0000269" key="2">
    <source>
    </source>
</evidence>
<evidence type="ECO:0000305" key="3"/>
<dbReference type="EMBL" id="AAFI02000013">
    <property type="protein sequence ID" value="EAL69927.2"/>
    <property type="molecule type" value="Genomic_DNA"/>
</dbReference>
<dbReference type="RefSeq" id="XP_643830.2">
    <property type="nucleotide sequence ID" value="XM_638738.2"/>
</dbReference>
<dbReference type="FunCoup" id="Q553Y1">
    <property type="interactions" value="6"/>
</dbReference>
<dbReference type="STRING" id="44689.Q553Y1"/>
<dbReference type="PaxDb" id="44689-DDB0238356"/>
<dbReference type="EnsemblProtists" id="EAL69927">
    <property type="protein sequence ID" value="EAL69927"/>
    <property type="gene ID" value="DDB_G0275293"/>
</dbReference>
<dbReference type="GeneID" id="8619877"/>
<dbReference type="KEGG" id="ddi:DDB_G0275293"/>
<dbReference type="dictyBase" id="DDB_G0275293">
    <property type="gene designation" value="p2xB"/>
</dbReference>
<dbReference type="VEuPathDB" id="AmoebaDB:DDB_G0275293"/>
<dbReference type="eggNOG" id="ENOG502RE1D">
    <property type="taxonomic scope" value="Eukaryota"/>
</dbReference>
<dbReference type="HOGENOM" id="CLU_060033_0_0_1"/>
<dbReference type="InParanoid" id="Q553Y1"/>
<dbReference type="OMA" id="THEHTHP"/>
<dbReference type="PhylomeDB" id="Q553Y1"/>
<dbReference type="Reactome" id="R-DDI-139853">
    <property type="pathway name" value="Elevation of cytosolic Ca2+ levels"/>
</dbReference>
<dbReference type="Reactome" id="R-DDI-418346">
    <property type="pathway name" value="Platelet homeostasis"/>
</dbReference>
<dbReference type="Reactome" id="R-DDI-6798695">
    <property type="pathway name" value="Neutrophil degranulation"/>
</dbReference>
<dbReference type="Reactome" id="R-DDI-844456">
    <property type="pathway name" value="The NLRP3 inflammasome"/>
</dbReference>
<dbReference type="PRO" id="PR:Q553Y1"/>
<dbReference type="Proteomes" id="UP000002195">
    <property type="component" value="Chromosome 2"/>
</dbReference>
<dbReference type="GO" id="GO:0031164">
    <property type="term" value="C:contractile vacuolar membrane"/>
    <property type="evidence" value="ECO:0000314"/>
    <property type="project" value="dictyBase"/>
</dbReference>
<dbReference type="GO" id="GO:0005524">
    <property type="term" value="F:ATP binding"/>
    <property type="evidence" value="ECO:0000305"/>
    <property type="project" value="dictyBase"/>
</dbReference>
<dbReference type="GO" id="GO:0035381">
    <property type="term" value="F:ATP-gated ion channel activity"/>
    <property type="evidence" value="ECO:0000314"/>
    <property type="project" value="dictyBase"/>
</dbReference>
<dbReference type="GO" id="GO:0140417">
    <property type="term" value="F:intracellularly ATP-gated calcium channel activity"/>
    <property type="evidence" value="ECO:0000316"/>
    <property type="project" value="dictyBase"/>
</dbReference>
<dbReference type="GO" id="GO:0070588">
    <property type="term" value="P:calcium ion transmembrane transport"/>
    <property type="evidence" value="ECO:0000316"/>
    <property type="project" value="dictyBase"/>
</dbReference>
<dbReference type="GO" id="GO:0071476">
    <property type="term" value="P:cellular hypotonic response"/>
    <property type="evidence" value="ECO:0000316"/>
    <property type="project" value="dictyBase"/>
</dbReference>
<dbReference type="GO" id="GO:0006811">
    <property type="term" value="P:monoatomic ion transport"/>
    <property type="evidence" value="ECO:0000314"/>
    <property type="project" value="dictyBase"/>
</dbReference>
<dbReference type="GO" id="GO:0050848">
    <property type="term" value="P:regulation of calcium-mediated signaling"/>
    <property type="evidence" value="ECO:0000316"/>
    <property type="project" value="dictyBase"/>
</dbReference>
<dbReference type="FunFam" id="1.10.287.940:FF:000012">
    <property type="entry name" value="P2X receptor A"/>
    <property type="match status" value="1"/>
</dbReference>
<dbReference type="FunFam" id="2.60.490.10:FF:000006">
    <property type="entry name" value="P2X receptor B"/>
    <property type="match status" value="1"/>
</dbReference>
<dbReference type="FunFam" id="1.10.287.940:FF:000010">
    <property type="entry name" value="P2X receptor E"/>
    <property type="match status" value="1"/>
</dbReference>
<dbReference type="Gene3D" id="1.10.287.940">
    <property type="entry name" value="atp-gated p2x4 ion channel"/>
    <property type="match status" value="2"/>
</dbReference>
<dbReference type="PANTHER" id="PTHR10125">
    <property type="entry name" value="P2X PURINOCEPTOR"/>
    <property type="match status" value="1"/>
</dbReference>
<dbReference type="PANTHER" id="PTHR10125:SF27">
    <property type="entry name" value="P2X RECEPTOR A-RELATED"/>
    <property type="match status" value="1"/>
</dbReference>
<dbReference type="Pfam" id="PF00864">
    <property type="entry name" value="P2X_receptor"/>
    <property type="match status" value="2"/>
</dbReference>
<proteinExistence type="inferred from homology"/>
<accession>Q553Y1</accession>
<comment type="function">
    <text evidence="2">P2X receptors are ATP-gated ion channels that play a role in intracellular calcium signaling. Not required for the purinergic response to extracellular nucleotides. Not essential for osmoregulation. Inward currents are evoked by intracellular ATP and ATP analogs. Insensitive to the P2 receptor antagonists PPADS and suramin, and also copper ions. Inhibited by sodium ions. Permeable to chloride ions.</text>
</comment>
<comment type="subcellular location">
    <subcellularLocation>
        <location evidence="2">Contractile vacuole membrane</location>
    </subcellularLocation>
    <text>Ligand binding domain within the lumen of the vacuole.</text>
</comment>
<comment type="disruption phenotype">
    <text evidence="2">Null cells are still capable of osmoregulation and do not show any noticeable differences in their sensitivity to hypotonic conditions. Quintuple p2xA/p2xB/p2XC/p2xd/p2xE null cells exhibit a slight delay in their osmoregulatory response, but are still capable of regulating their cell volume in water. Extracellular purinergic response to ATP persists in the quintuple null cells and p2xB null cells with no alteration in the kinetics of the response, but the magnitude of the response is lower. Responses to the calmodulin antagonist calmidazolium are reduced and intracellular calcium signaling is disrupted in quintuple null cells. The presence of copper prevents both wild type and quintuple null cells from undergoing an osmoregulatory decrease in cell volume. No obvious morphological phenotype was apparent in the p2xB or quintuple p2x null strains. The quintuple null strains grow slightly slower than wild type in shaking axenic cultures.</text>
</comment>
<comment type="similarity">
    <text evidence="3">Belongs to the P2X receptor family.</text>
</comment>
<protein>
    <recommendedName>
        <fullName>P2X receptor B</fullName>
        <shortName>P2XB</shortName>
    </recommendedName>
</protein>
<organism>
    <name type="scientific">Dictyostelium discoideum</name>
    <name type="common">Social amoeba</name>
    <dbReference type="NCBI Taxonomy" id="44689"/>
    <lineage>
        <taxon>Eukaryota</taxon>
        <taxon>Amoebozoa</taxon>
        <taxon>Evosea</taxon>
        <taxon>Eumycetozoa</taxon>
        <taxon>Dictyostelia</taxon>
        <taxon>Dictyosteliales</taxon>
        <taxon>Dictyosteliaceae</taxon>
        <taxon>Dictyostelium</taxon>
    </lineage>
</organism>
<sequence>MTIDWDSILSYNTIKVVRIRDRRLGILHLCFLIVIVLYVVVYSAIIKKGYVTTEEPVGSIRTSLLAPDELKSNQAYCKNNTEPYPYEKLDCVYYDEKLALFPIGDDVGFTASTRMRISDQTVNCSLMNPSCKFYTNTSMNVYLADIESFTVLIDHTMYAPSSQIQFNGDDLSGYVLDQNGNEIQLNESVNTIGVQGKPDILQLGKLLEFAGVDLDGPSLVNSSNSIRYDGCVLFVFIEYSNTFSYDLKKIKYVYSIKKVDDTAYDVPEVIILNNENSRLYYKRHAIRLIFIQTGVIGSFNFQSLLLTLVSGLGLLTVSTLIVDQLAIRFLPQRKSYSSLKFQTTESFRMKKKIVNDDGEDKLYHNIEAL</sequence>
<feature type="chain" id="PRO_0000390409" description="P2X receptor B">
    <location>
        <begin position="1"/>
        <end position="369"/>
    </location>
</feature>
<feature type="topological domain" description="Cytoplasmic" evidence="1">
    <location>
        <begin position="1"/>
        <end position="25"/>
    </location>
</feature>
<feature type="transmembrane region" description="Helical" evidence="1">
    <location>
        <begin position="26"/>
        <end position="46"/>
    </location>
</feature>
<feature type="topological domain" description="Lumenal" evidence="1">
    <location>
        <begin position="47"/>
        <end position="369"/>
    </location>
</feature>
<feature type="region of interest" description="Pore-forming motif" evidence="1">
    <location>
        <begin position="283"/>
        <end position="296"/>
    </location>
</feature>
<keyword id="KW-0407">Ion channel</keyword>
<keyword id="KW-0406">Ion transport</keyword>
<keyword id="KW-1071">Ligand-gated ion channel</keyword>
<keyword id="KW-0472">Membrane</keyword>
<keyword id="KW-0675">Receptor</keyword>
<keyword id="KW-1185">Reference proteome</keyword>
<keyword id="KW-0812">Transmembrane</keyword>
<keyword id="KW-1133">Transmembrane helix</keyword>
<keyword id="KW-0813">Transport</keyword>
<keyword id="KW-0926">Vacuole</keyword>
<gene>
    <name type="primary">p2xB</name>
    <name type="ORF">DDB_G0275293</name>
</gene>
<name>P2XB_DICDI</name>
<reference key="1">
    <citation type="journal article" date="2002" name="Nature">
        <title>Sequence and analysis of chromosome 2 of Dictyostelium discoideum.</title>
        <authorList>
            <person name="Gloeckner G."/>
            <person name="Eichinger L."/>
            <person name="Szafranski K."/>
            <person name="Pachebat J.A."/>
            <person name="Bankier A.T."/>
            <person name="Dear P.H."/>
            <person name="Lehmann R."/>
            <person name="Baumgart C."/>
            <person name="Parra G."/>
            <person name="Abril J.F."/>
            <person name="Guigo R."/>
            <person name="Kumpf K."/>
            <person name="Tunggal B."/>
            <person name="Cox E.C."/>
            <person name="Quail M.A."/>
            <person name="Platzer M."/>
            <person name="Rosenthal A."/>
            <person name="Noegel A.A."/>
        </authorList>
    </citation>
    <scope>NUCLEOTIDE SEQUENCE [LARGE SCALE GENOMIC DNA]</scope>
    <source>
        <strain>AX4</strain>
    </source>
</reference>
<reference key="2">
    <citation type="journal article" date="2005" name="Nature">
        <title>The genome of the social amoeba Dictyostelium discoideum.</title>
        <authorList>
            <person name="Eichinger L."/>
            <person name="Pachebat J.A."/>
            <person name="Gloeckner G."/>
            <person name="Rajandream M.A."/>
            <person name="Sucgang R."/>
            <person name="Berriman M."/>
            <person name="Song J."/>
            <person name="Olsen R."/>
            <person name="Szafranski K."/>
            <person name="Xu Q."/>
            <person name="Tunggal B."/>
            <person name="Kummerfeld S."/>
            <person name="Madera M."/>
            <person name="Konfortov B.A."/>
            <person name="Rivero F."/>
            <person name="Bankier A.T."/>
            <person name="Lehmann R."/>
            <person name="Hamlin N."/>
            <person name="Davies R."/>
            <person name="Gaudet P."/>
            <person name="Fey P."/>
            <person name="Pilcher K."/>
            <person name="Chen G."/>
            <person name="Saunders D."/>
            <person name="Sodergren E.J."/>
            <person name="Davis P."/>
            <person name="Kerhornou A."/>
            <person name="Nie X."/>
            <person name="Hall N."/>
            <person name="Anjard C."/>
            <person name="Hemphill L."/>
            <person name="Bason N."/>
            <person name="Farbrother P."/>
            <person name="Desany B."/>
            <person name="Just E."/>
            <person name="Morio T."/>
            <person name="Rost R."/>
            <person name="Churcher C.M."/>
            <person name="Cooper J."/>
            <person name="Haydock S."/>
            <person name="van Driessche N."/>
            <person name="Cronin A."/>
            <person name="Goodhead I."/>
            <person name="Muzny D.M."/>
            <person name="Mourier T."/>
            <person name="Pain A."/>
            <person name="Lu M."/>
            <person name="Harper D."/>
            <person name="Lindsay R."/>
            <person name="Hauser H."/>
            <person name="James K.D."/>
            <person name="Quiles M."/>
            <person name="Madan Babu M."/>
            <person name="Saito T."/>
            <person name="Buchrieser C."/>
            <person name="Wardroper A."/>
            <person name="Felder M."/>
            <person name="Thangavelu M."/>
            <person name="Johnson D."/>
            <person name="Knights A."/>
            <person name="Loulseged H."/>
            <person name="Mungall K.L."/>
            <person name="Oliver K."/>
            <person name="Price C."/>
            <person name="Quail M.A."/>
            <person name="Urushihara H."/>
            <person name="Hernandez J."/>
            <person name="Rabbinowitsch E."/>
            <person name="Steffen D."/>
            <person name="Sanders M."/>
            <person name="Ma J."/>
            <person name="Kohara Y."/>
            <person name="Sharp S."/>
            <person name="Simmonds M.N."/>
            <person name="Spiegler S."/>
            <person name="Tivey A."/>
            <person name="Sugano S."/>
            <person name="White B."/>
            <person name="Walker D."/>
            <person name="Woodward J.R."/>
            <person name="Winckler T."/>
            <person name="Tanaka Y."/>
            <person name="Shaulsky G."/>
            <person name="Schleicher M."/>
            <person name="Weinstock G.M."/>
            <person name="Rosenthal A."/>
            <person name="Cox E.C."/>
            <person name="Chisholm R.L."/>
            <person name="Gibbs R.A."/>
            <person name="Loomis W.F."/>
            <person name="Platzer M."/>
            <person name="Kay R.R."/>
            <person name="Williams J.G."/>
            <person name="Dear P.H."/>
            <person name="Noegel A.A."/>
            <person name="Barrell B.G."/>
            <person name="Kuspa A."/>
        </authorList>
    </citation>
    <scope>NUCLEOTIDE SEQUENCE [LARGE SCALE GENOMIC DNA]</scope>
    <source>
        <strain>AX4</strain>
    </source>
</reference>
<reference key="3">
    <citation type="journal article" date="2009" name="J. Biol. Chem.">
        <title>Functional characterization of intracellular Dictyostelium discoideum P2X receptors.</title>
        <authorList>
            <person name="Ludlow M.J."/>
            <person name="Durai L."/>
            <person name="Ennion S.J."/>
        </authorList>
    </citation>
    <scope>FUNCTION</scope>
    <scope>SUBCELLULAR LOCATION</scope>
    <scope>DISRUPTION PHENOTYPE</scope>
</reference>